<reference key="1">
    <citation type="submission" date="2008-05" db="EMBL/GenBank/DDBJ databases">
        <title>Complete sequence of Chlorobium limicola DSM 245.</title>
        <authorList>
            <consortium name="US DOE Joint Genome Institute"/>
            <person name="Lucas S."/>
            <person name="Copeland A."/>
            <person name="Lapidus A."/>
            <person name="Glavina del Rio T."/>
            <person name="Dalin E."/>
            <person name="Tice H."/>
            <person name="Bruce D."/>
            <person name="Goodwin L."/>
            <person name="Pitluck S."/>
            <person name="Schmutz J."/>
            <person name="Larimer F."/>
            <person name="Land M."/>
            <person name="Hauser L."/>
            <person name="Kyrpides N."/>
            <person name="Ovchinnikova G."/>
            <person name="Zhao F."/>
            <person name="Li T."/>
            <person name="Liu Z."/>
            <person name="Overmann J."/>
            <person name="Bryant D.A."/>
            <person name="Richardson P."/>
        </authorList>
    </citation>
    <scope>NUCLEOTIDE SEQUENCE [LARGE SCALE GENOMIC DNA]</scope>
    <source>
        <strain>DSM 245 / NBRC 103803 / 6330</strain>
    </source>
</reference>
<comment type="function">
    <text evidence="2">GTP hydrolase that promotes the GTP-dependent binding of aminoacyl-tRNA to the A-site of ribosomes during protein biosynthesis.</text>
</comment>
<comment type="catalytic activity">
    <reaction evidence="2">
        <text>GTP + H2O = GDP + phosphate + H(+)</text>
        <dbReference type="Rhea" id="RHEA:19669"/>
        <dbReference type="ChEBI" id="CHEBI:15377"/>
        <dbReference type="ChEBI" id="CHEBI:15378"/>
        <dbReference type="ChEBI" id="CHEBI:37565"/>
        <dbReference type="ChEBI" id="CHEBI:43474"/>
        <dbReference type="ChEBI" id="CHEBI:58189"/>
        <dbReference type="EC" id="3.6.5.3"/>
    </reaction>
    <physiologicalReaction direction="left-to-right" evidence="2">
        <dbReference type="Rhea" id="RHEA:19670"/>
    </physiologicalReaction>
</comment>
<comment type="subunit">
    <text evidence="2">Monomer.</text>
</comment>
<comment type="subcellular location">
    <subcellularLocation>
        <location evidence="2">Cytoplasm</location>
    </subcellularLocation>
</comment>
<comment type="similarity">
    <text evidence="2">Belongs to the TRAFAC class translation factor GTPase superfamily. Classic translation factor GTPase family. EF-Tu/EF-1A subfamily.</text>
</comment>
<proteinExistence type="inferred from homology"/>
<sequence length="393" mass="43141">MAKESYKRDKPHVNIGTIGHVDHGKTTLTAAITSVLAKQGLALQRDFGSIDKAPEERERGITISTAHVEYQTKKRHYAHIDCPGHADYIKNMITGAAQMDGAILVVAGTDGPMPQTREHILLARQVNVPALVVFLNKVDIADPELLELVELELRELLTEYNFPGDDIPIIKGSALKALDGDPEGEKAIMELMDAVDEFIPEPVRDVDKPFLMPVEDVFSISGRGTVGTGRIERGRIKINEEVEIVGIKPTRKSVVTGIEMFQKLLDEGQAGDNAGLLLRGVDKTELERGMVIAKPGSIKPHTKFKAEVYILRKEEGGRHTPFFNGYRPQFYFRTTDVTGSVTLPEGVEMVMPGDNLSVEVELIVPIAMDEGLRFAIREGGRTVGAGSVTKIIE</sequence>
<gene>
    <name evidence="2" type="primary">tuf</name>
    <name type="ordered locus">Clim_2231</name>
</gene>
<keyword id="KW-0963">Cytoplasm</keyword>
<keyword id="KW-0251">Elongation factor</keyword>
<keyword id="KW-0342">GTP-binding</keyword>
<keyword id="KW-0378">Hydrolase</keyword>
<keyword id="KW-0460">Magnesium</keyword>
<keyword id="KW-0479">Metal-binding</keyword>
<keyword id="KW-0547">Nucleotide-binding</keyword>
<keyword id="KW-0648">Protein biosynthesis</keyword>
<protein>
    <recommendedName>
        <fullName evidence="2">Elongation factor Tu</fullName>
        <shortName evidence="2">EF-Tu</shortName>
        <ecNumber evidence="2">3.6.5.3</ecNumber>
    </recommendedName>
</protein>
<accession>B3EH93</accession>
<name>EFTU_CHLL2</name>
<dbReference type="EC" id="3.6.5.3" evidence="2"/>
<dbReference type="EMBL" id="CP001097">
    <property type="protein sequence ID" value="ACD91255.1"/>
    <property type="molecule type" value="Genomic_DNA"/>
</dbReference>
<dbReference type="RefSeq" id="WP_012467122.1">
    <property type="nucleotide sequence ID" value="NC_010803.1"/>
</dbReference>
<dbReference type="SMR" id="B3EH93"/>
<dbReference type="STRING" id="290315.Clim_2231"/>
<dbReference type="KEGG" id="cli:Clim_2231"/>
<dbReference type="eggNOG" id="COG0050">
    <property type="taxonomic scope" value="Bacteria"/>
</dbReference>
<dbReference type="HOGENOM" id="CLU_007265_0_1_10"/>
<dbReference type="OrthoDB" id="9804504at2"/>
<dbReference type="Proteomes" id="UP000008841">
    <property type="component" value="Chromosome"/>
</dbReference>
<dbReference type="GO" id="GO:0005829">
    <property type="term" value="C:cytosol"/>
    <property type="evidence" value="ECO:0007669"/>
    <property type="project" value="TreeGrafter"/>
</dbReference>
<dbReference type="GO" id="GO:0005525">
    <property type="term" value="F:GTP binding"/>
    <property type="evidence" value="ECO:0007669"/>
    <property type="project" value="UniProtKB-UniRule"/>
</dbReference>
<dbReference type="GO" id="GO:0003924">
    <property type="term" value="F:GTPase activity"/>
    <property type="evidence" value="ECO:0007669"/>
    <property type="project" value="InterPro"/>
</dbReference>
<dbReference type="GO" id="GO:0003746">
    <property type="term" value="F:translation elongation factor activity"/>
    <property type="evidence" value="ECO:0007669"/>
    <property type="project" value="UniProtKB-UniRule"/>
</dbReference>
<dbReference type="CDD" id="cd01884">
    <property type="entry name" value="EF_Tu"/>
    <property type="match status" value="1"/>
</dbReference>
<dbReference type="CDD" id="cd03697">
    <property type="entry name" value="EFTU_II"/>
    <property type="match status" value="1"/>
</dbReference>
<dbReference type="CDD" id="cd03707">
    <property type="entry name" value="EFTU_III"/>
    <property type="match status" value="1"/>
</dbReference>
<dbReference type="FunFam" id="2.40.30.10:FF:000001">
    <property type="entry name" value="Elongation factor Tu"/>
    <property type="match status" value="1"/>
</dbReference>
<dbReference type="FunFam" id="3.40.50.300:FF:000003">
    <property type="entry name" value="Elongation factor Tu"/>
    <property type="match status" value="1"/>
</dbReference>
<dbReference type="Gene3D" id="3.40.50.300">
    <property type="entry name" value="P-loop containing nucleotide triphosphate hydrolases"/>
    <property type="match status" value="1"/>
</dbReference>
<dbReference type="Gene3D" id="2.40.30.10">
    <property type="entry name" value="Translation factors"/>
    <property type="match status" value="2"/>
</dbReference>
<dbReference type="HAMAP" id="MF_00118_B">
    <property type="entry name" value="EF_Tu_B"/>
    <property type="match status" value="1"/>
</dbReference>
<dbReference type="InterPro" id="IPR041709">
    <property type="entry name" value="EF-Tu_GTP-bd"/>
</dbReference>
<dbReference type="InterPro" id="IPR050055">
    <property type="entry name" value="EF-Tu_GTPase"/>
</dbReference>
<dbReference type="InterPro" id="IPR004161">
    <property type="entry name" value="EFTu-like_2"/>
</dbReference>
<dbReference type="InterPro" id="IPR033720">
    <property type="entry name" value="EFTU_2"/>
</dbReference>
<dbReference type="InterPro" id="IPR031157">
    <property type="entry name" value="G_TR_CS"/>
</dbReference>
<dbReference type="InterPro" id="IPR027417">
    <property type="entry name" value="P-loop_NTPase"/>
</dbReference>
<dbReference type="InterPro" id="IPR005225">
    <property type="entry name" value="Small_GTP-bd"/>
</dbReference>
<dbReference type="InterPro" id="IPR000795">
    <property type="entry name" value="T_Tr_GTP-bd_dom"/>
</dbReference>
<dbReference type="InterPro" id="IPR009000">
    <property type="entry name" value="Transl_B-barrel_sf"/>
</dbReference>
<dbReference type="InterPro" id="IPR009001">
    <property type="entry name" value="Transl_elong_EF1A/Init_IF2_C"/>
</dbReference>
<dbReference type="InterPro" id="IPR004541">
    <property type="entry name" value="Transl_elong_EFTu/EF1A_bac/org"/>
</dbReference>
<dbReference type="InterPro" id="IPR004160">
    <property type="entry name" value="Transl_elong_EFTu/EF1A_C"/>
</dbReference>
<dbReference type="NCBIfam" id="TIGR00485">
    <property type="entry name" value="EF-Tu"/>
    <property type="match status" value="1"/>
</dbReference>
<dbReference type="NCBIfam" id="NF000766">
    <property type="entry name" value="PRK00049.1"/>
    <property type="match status" value="1"/>
</dbReference>
<dbReference type="NCBIfam" id="NF009372">
    <property type="entry name" value="PRK12735.1"/>
    <property type="match status" value="1"/>
</dbReference>
<dbReference type="NCBIfam" id="NF009373">
    <property type="entry name" value="PRK12736.1"/>
    <property type="match status" value="1"/>
</dbReference>
<dbReference type="NCBIfam" id="TIGR00231">
    <property type="entry name" value="small_GTP"/>
    <property type="match status" value="1"/>
</dbReference>
<dbReference type="PANTHER" id="PTHR43721:SF22">
    <property type="entry name" value="ELONGATION FACTOR TU, MITOCHONDRIAL"/>
    <property type="match status" value="1"/>
</dbReference>
<dbReference type="PANTHER" id="PTHR43721">
    <property type="entry name" value="ELONGATION FACTOR TU-RELATED"/>
    <property type="match status" value="1"/>
</dbReference>
<dbReference type="Pfam" id="PF00009">
    <property type="entry name" value="GTP_EFTU"/>
    <property type="match status" value="1"/>
</dbReference>
<dbReference type="Pfam" id="PF03144">
    <property type="entry name" value="GTP_EFTU_D2"/>
    <property type="match status" value="1"/>
</dbReference>
<dbReference type="Pfam" id="PF03143">
    <property type="entry name" value="GTP_EFTU_D3"/>
    <property type="match status" value="1"/>
</dbReference>
<dbReference type="PRINTS" id="PR00315">
    <property type="entry name" value="ELONGATNFCT"/>
</dbReference>
<dbReference type="SUPFAM" id="SSF50465">
    <property type="entry name" value="EF-Tu/eEF-1alpha/eIF2-gamma C-terminal domain"/>
    <property type="match status" value="1"/>
</dbReference>
<dbReference type="SUPFAM" id="SSF52540">
    <property type="entry name" value="P-loop containing nucleoside triphosphate hydrolases"/>
    <property type="match status" value="1"/>
</dbReference>
<dbReference type="SUPFAM" id="SSF50447">
    <property type="entry name" value="Translation proteins"/>
    <property type="match status" value="1"/>
</dbReference>
<dbReference type="PROSITE" id="PS00301">
    <property type="entry name" value="G_TR_1"/>
    <property type="match status" value="1"/>
</dbReference>
<dbReference type="PROSITE" id="PS51722">
    <property type="entry name" value="G_TR_2"/>
    <property type="match status" value="1"/>
</dbReference>
<feature type="chain" id="PRO_1000095054" description="Elongation factor Tu">
    <location>
        <begin position="1"/>
        <end position="393"/>
    </location>
</feature>
<feature type="domain" description="tr-type G">
    <location>
        <begin position="10"/>
        <end position="203"/>
    </location>
</feature>
<feature type="region of interest" description="G1" evidence="1">
    <location>
        <begin position="19"/>
        <end position="26"/>
    </location>
</feature>
<feature type="region of interest" description="G2" evidence="1">
    <location>
        <begin position="60"/>
        <end position="64"/>
    </location>
</feature>
<feature type="region of interest" description="G3" evidence="1">
    <location>
        <begin position="81"/>
        <end position="84"/>
    </location>
</feature>
<feature type="region of interest" description="G4" evidence="1">
    <location>
        <begin position="136"/>
        <end position="139"/>
    </location>
</feature>
<feature type="region of interest" description="G5" evidence="1">
    <location>
        <begin position="173"/>
        <end position="175"/>
    </location>
</feature>
<feature type="binding site" evidence="2">
    <location>
        <begin position="19"/>
        <end position="26"/>
    </location>
    <ligand>
        <name>GTP</name>
        <dbReference type="ChEBI" id="CHEBI:37565"/>
    </ligand>
</feature>
<feature type="binding site" evidence="2">
    <location>
        <position position="26"/>
    </location>
    <ligand>
        <name>Mg(2+)</name>
        <dbReference type="ChEBI" id="CHEBI:18420"/>
    </ligand>
</feature>
<feature type="binding site" evidence="2">
    <location>
        <begin position="81"/>
        <end position="85"/>
    </location>
    <ligand>
        <name>GTP</name>
        <dbReference type="ChEBI" id="CHEBI:37565"/>
    </ligand>
</feature>
<feature type="binding site" evidence="2">
    <location>
        <begin position="136"/>
        <end position="139"/>
    </location>
    <ligand>
        <name>GTP</name>
        <dbReference type="ChEBI" id="CHEBI:37565"/>
    </ligand>
</feature>
<evidence type="ECO:0000250" key="1"/>
<evidence type="ECO:0000255" key="2">
    <source>
        <dbReference type="HAMAP-Rule" id="MF_00118"/>
    </source>
</evidence>
<organism>
    <name type="scientific">Chlorobium limicola (strain DSM 245 / NBRC 103803 / 6330)</name>
    <dbReference type="NCBI Taxonomy" id="290315"/>
    <lineage>
        <taxon>Bacteria</taxon>
        <taxon>Pseudomonadati</taxon>
        <taxon>Chlorobiota</taxon>
        <taxon>Chlorobiia</taxon>
        <taxon>Chlorobiales</taxon>
        <taxon>Chlorobiaceae</taxon>
        <taxon>Chlorobium/Pelodictyon group</taxon>
        <taxon>Chlorobium</taxon>
    </lineage>
</organism>